<sequence length="619" mass="70514">MYGFVNHALELLVIRNYGPEVWEDIKKEAQLDEEGQFLVRIIYDDSKTYDLVAAASKVLNLNAGEILQMFGKMFFVFCQESGYDTILRVLGSNVREFLQNLDALHDHLATIYPGMRAPSFRCTDAEKGKGLILHYYSEREGLQDIVIGIIKTVAQQIHGTEIDMKVIQQRNEECDHTQFLIEEKESKEEDFYEDLDRFEENGTQESRISPYTFCKAFPFHIIFDRDLVVTQCGNAIYRVLPQLQPGNCSLLSVFSLVRPHIDISFHGILSHINTVFVLRSKEGLLDVEKLECEDELTGTEISCLRLKGQMIYLPEADSILFLCSPSVMNLDDLTRRGLYLSDIPLHDATRDLVLLGEQFREEYKLTQELEILTDRLQLTLRALEDEKKKTDTLLYSVLPPSVANELRHKRPVPAKRYDNVTILFSGIVGFNAFCSKHASGEGAMKIVNLLNDLYTRFDTLTDSRKNPFVYKVETVGDKYMTVSGLPEPCIHHARSICHLALDMMEIAGQVQVDGESVQITIGIHTGEVVTGVIGQRMPRYCLFGNTVNLTSRTETTGEKGKINVSEYTYRCLMSPENSDPQFHLEHRGPVSMKGKKEPMQVWFLSRKNTGTEETKQDDD</sequence>
<dbReference type="EC" id="4.6.1.2" evidence="3 4 5"/>
<dbReference type="EMBL" id="X66533">
    <property type="protein sequence ID" value="CAA47144.1"/>
    <property type="molecule type" value="mRNA"/>
</dbReference>
<dbReference type="EMBL" id="AF020340">
    <property type="protein sequence ID" value="AAB94877.1"/>
    <property type="molecule type" value="mRNA"/>
</dbReference>
<dbReference type="EMBL" id="AK296680">
    <property type="protein sequence ID" value="BAH12412.1"/>
    <property type="molecule type" value="mRNA"/>
</dbReference>
<dbReference type="EMBL" id="AC114761">
    <property type="status" value="NOT_ANNOTATED_CDS"/>
    <property type="molecule type" value="Genomic_DNA"/>
</dbReference>
<dbReference type="EMBL" id="BC047620">
    <property type="protein sequence ID" value="AAH47620.2"/>
    <property type="molecule type" value="mRNA"/>
</dbReference>
<dbReference type="CCDS" id="CCDS47154.1">
    <molecule id="Q02153-1"/>
</dbReference>
<dbReference type="CCDS" id="CCDS77976.1">
    <molecule id="Q02153-2"/>
</dbReference>
<dbReference type="CCDS" id="CCDS77977.1">
    <molecule id="Q02153-3"/>
</dbReference>
<dbReference type="PIR" id="S23097">
    <property type="entry name" value="S23097"/>
</dbReference>
<dbReference type="RefSeq" id="NP_000848.1">
    <molecule id="Q02153-1"/>
    <property type="nucleotide sequence ID" value="NM_000857.5"/>
</dbReference>
<dbReference type="RefSeq" id="NP_001278881.1">
    <molecule id="Q02153-3"/>
    <property type="nucleotide sequence ID" value="NM_001291952.3"/>
</dbReference>
<dbReference type="RefSeq" id="NP_001278882.1">
    <property type="nucleotide sequence ID" value="NM_001291953.1"/>
</dbReference>
<dbReference type="RefSeq" id="NP_001278883.1">
    <molecule id="Q02153-2"/>
    <property type="nucleotide sequence ID" value="NM_001291954.3"/>
</dbReference>
<dbReference type="PDB" id="2WZ1">
    <property type="method" value="X-ray"/>
    <property type="resolution" value="1.63 A"/>
    <property type="chains" value="A/B=408-619"/>
</dbReference>
<dbReference type="PDB" id="3UVJ">
    <property type="method" value="X-ray"/>
    <property type="resolution" value="2.08 A"/>
    <property type="chains" value="B/D=408-619"/>
</dbReference>
<dbReference type="PDB" id="4NI2">
    <property type="method" value="X-ray"/>
    <property type="resolution" value="1.90 A"/>
    <property type="chains" value="B=408-608"/>
</dbReference>
<dbReference type="PDB" id="5MNW">
    <property type="method" value="NMR"/>
    <property type="chains" value="A=1-188"/>
</dbReference>
<dbReference type="PDB" id="6JT0">
    <property type="method" value="EM"/>
    <property type="resolution" value="4.00 A"/>
    <property type="chains" value="B=1-619"/>
</dbReference>
<dbReference type="PDB" id="6JT1">
    <property type="method" value="EM"/>
    <property type="resolution" value="3.90 A"/>
    <property type="chains" value="B=1-619"/>
</dbReference>
<dbReference type="PDB" id="6JT2">
    <property type="method" value="EM"/>
    <property type="resolution" value="3.80 A"/>
    <property type="chains" value="B=1-619"/>
</dbReference>
<dbReference type="PDB" id="7D9R">
    <property type="method" value="EM"/>
    <property type="resolution" value="3.30 A"/>
    <property type="chains" value="B=1-619"/>
</dbReference>
<dbReference type="PDB" id="7D9S">
    <property type="method" value="EM"/>
    <property type="resolution" value="3.40 A"/>
    <property type="chains" value="B=1-619"/>
</dbReference>
<dbReference type="PDB" id="7D9T">
    <property type="method" value="EM"/>
    <property type="resolution" value="4.10 A"/>
    <property type="chains" value="B=1-619"/>
</dbReference>
<dbReference type="PDB" id="7D9U">
    <property type="method" value="EM"/>
    <property type="resolution" value="3.80 A"/>
    <property type="chains" value="B=1-619"/>
</dbReference>
<dbReference type="PDB" id="8HBE">
    <property type="method" value="EM"/>
    <property type="resolution" value="3.20 A"/>
    <property type="chains" value="B=1-619"/>
</dbReference>
<dbReference type="PDB" id="8HBF">
    <property type="method" value="EM"/>
    <property type="resolution" value="3.10 A"/>
    <property type="chains" value="B=1-619"/>
</dbReference>
<dbReference type="PDB" id="8HBH">
    <property type="method" value="EM"/>
    <property type="resolution" value="3.10 A"/>
    <property type="chains" value="B=1-619"/>
</dbReference>
<dbReference type="PDBsum" id="2WZ1"/>
<dbReference type="PDBsum" id="3UVJ"/>
<dbReference type="PDBsum" id="4NI2"/>
<dbReference type="PDBsum" id="5MNW"/>
<dbReference type="PDBsum" id="6JT0"/>
<dbReference type="PDBsum" id="6JT1"/>
<dbReference type="PDBsum" id="6JT2"/>
<dbReference type="PDBsum" id="7D9R"/>
<dbReference type="PDBsum" id="7D9S"/>
<dbReference type="PDBsum" id="7D9T"/>
<dbReference type="PDBsum" id="7D9U"/>
<dbReference type="PDBsum" id="8HBE"/>
<dbReference type="PDBsum" id="8HBF"/>
<dbReference type="PDBsum" id="8HBH"/>
<dbReference type="EMDB" id="EMD-30618"/>
<dbReference type="EMDB" id="EMD-30619"/>
<dbReference type="EMDB" id="EMD-30620"/>
<dbReference type="EMDB" id="EMD-30621"/>
<dbReference type="EMDB" id="EMD-34623"/>
<dbReference type="EMDB" id="EMD-34627"/>
<dbReference type="EMDB" id="EMD-34632"/>
<dbReference type="EMDB" id="EMD-9883"/>
<dbReference type="EMDB" id="EMD-9884"/>
<dbReference type="EMDB" id="EMD-9885"/>
<dbReference type="SMR" id="Q02153"/>
<dbReference type="BioGRID" id="109238">
    <property type="interactions" value="34"/>
</dbReference>
<dbReference type="ComplexPortal" id="CPX-2860">
    <property type="entry name" value="Soluble guanylate cyclase complex, SGCalpha2-SGCbeta1 variant"/>
</dbReference>
<dbReference type="ComplexPortal" id="CPX-928">
    <property type="entry name" value="Soluble guanylate cyclase complex, SGCalpha1-SGCbeta1 variant"/>
</dbReference>
<dbReference type="CORUM" id="Q02153"/>
<dbReference type="FunCoup" id="Q02153">
    <property type="interactions" value="1306"/>
</dbReference>
<dbReference type="IntAct" id="Q02153">
    <property type="interactions" value="26"/>
</dbReference>
<dbReference type="MINT" id="Q02153"/>
<dbReference type="STRING" id="9606.ENSP00000426786"/>
<dbReference type="BindingDB" id="Q02153"/>
<dbReference type="ChEMBL" id="CHEMBL3137281"/>
<dbReference type="DrugBank" id="DB16126">
    <property type="generic name" value="Cinaciguat"/>
</dbReference>
<dbReference type="DrugBank" id="DB09401">
    <property type="generic name" value="Isosorbide"/>
</dbReference>
<dbReference type="DrugBank" id="DB00435">
    <property type="generic name" value="Nitric Oxide"/>
</dbReference>
<dbReference type="DrugBank" id="DB00727">
    <property type="generic name" value="Nitroglycerin"/>
</dbReference>
<dbReference type="DrugBank" id="DB00325">
    <property type="generic name" value="Nitroprusside"/>
</dbReference>
<dbReference type="DrugBank" id="DB16300">
    <property type="generic name" value="Praliciguat"/>
</dbReference>
<dbReference type="DrugBank" id="DB16700">
    <property type="generic name" value="Runcaciguat"/>
</dbReference>
<dbReference type="DrugBank" id="DB15456">
    <property type="generic name" value="Vericiguat"/>
</dbReference>
<dbReference type="DrugBank" id="DB18315">
    <property type="generic name" value="Zagociguat"/>
</dbReference>
<dbReference type="DrugCentral" id="Q02153"/>
<dbReference type="GuidetoPHARMACOLOGY" id="1290"/>
<dbReference type="iPTMnet" id="Q02153"/>
<dbReference type="PhosphoSitePlus" id="Q02153"/>
<dbReference type="BioMuta" id="GUCY1B3"/>
<dbReference type="DMDM" id="399328"/>
<dbReference type="jPOST" id="Q02153"/>
<dbReference type="MassIVE" id="Q02153"/>
<dbReference type="PaxDb" id="9606-ENSP00000264424"/>
<dbReference type="PeptideAtlas" id="Q02153"/>
<dbReference type="ProteomicsDB" id="58052">
    <molecule id="Q02153-1"/>
</dbReference>
<dbReference type="ProteomicsDB" id="58053">
    <molecule id="Q02153-2"/>
</dbReference>
<dbReference type="ProteomicsDB" id="6567"/>
<dbReference type="Pumba" id="Q02153"/>
<dbReference type="Antibodypedia" id="4395">
    <property type="antibodies" value="290 antibodies from 36 providers"/>
</dbReference>
<dbReference type="DNASU" id="2983"/>
<dbReference type="Ensembl" id="ENST00000264424.13">
    <molecule id="Q02153-1"/>
    <property type="protein sequence ID" value="ENSP00000264424.8"/>
    <property type="gene ID" value="ENSG00000061918.14"/>
</dbReference>
<dbReference type="Ensembl" id="ENST00000503520.5">
    <molecule id="Q02153-2"/>
    <property type="protein sequence ID" value="ENSP00000420842.1"/>
    <property type="gene ID" value="ENSG00000061918.14"/>
</dbReference>
<dbReference type="Ensembl" id="ENST00000505764.5">
    <molecule id="Q02153-3"/>
    <property type="protein sequence ID" value="ENSP00000426319.1"/>
    <property type="gene ID" value="ENSG00000061918.14"/>
</dbReference>
<dbReference type="GeneID" id="2983"/>
<dbReference type="KEGG" id="hsa:2983"/>
<dbReference type="MANE-Select" id="ENST00000264424.13">
    <property type="protein sequence ID" value="ENSP00000264424.8"/>
    <property type="RefSeq nucleotide sequence ID" value="NM_000857.5"/>
    <property type="RefSeq protein sequence ID" value="NP_000848.1"/>
</dbReference>
<dbReference type="UCSC" id="uc003ipc.4">
    <molecule id="Q02153-1"/>
    <property type="organism name" value="human"/>
</dbReference>
<dbReference type="AGR" id="HGNC:4687"/>
<dbReference type="CTD" id="2983"/>
<dbReference type="DisGeNET" id="2983"/>
<dbReference type="GeneCards" id="GUCY1B1"/>
<dbReference type="HGNC" id="HGNC:4687">
    <property type="gene designation" value="GUCY1B1"/>
</dbReference>
<dbReference type="HPA" id="ENSG00000061918">
    <property type="expression patterns" value="Low tissue specificity"/>
</dbReference>
<dbReference type="MIM" id="139397">
    <property type="type" value="gene"/>
</dbReference>
<dbReference type="neXtProt" id="NX_Q02153"/>
<dbReference type="OpenTargets" id="ENSG00000061918"/>
<dbReference type="PharmGKB" id="PA29068"/>
<dbReference type="VEuPathDB" id="HostDB:ENSG00000061918"/>
<dbReference type="eggNOG" id="KOG4171">
    <property type="taxonomic scope" value="Eukaryota"/>
</dbReference>
<dbReference type="GeneTree" id="ENSGT00940000157483"/>
<dbReference type="InParanoid" id="Q02153"/>
<dbReference type="OMA" id="SHARCIG"/>
<dbReference type="OrthoDB" id="6127067at2759"/>
<dbReference type="PAN-GO" id="Q02153">
    <property type="GO annotations" value="5 GO annotations based on evolutionary models"/>
</dbReference>
<dbReference type="PhylomeDB" id="Q02153"/>
<dbReference type="TreeFam" id="TF351403"/>
<dbReference type="BRENDA" id="4.6.1.2">
    <property type="organism ID" value="2681"/>
</dbReference>
<dbReference type="PathwayCommons" id="Q02153"/>
<dbReference type="Reactome" id="R-HSA-392154">
    <property type="pathway name" value="Nitric oxide stimulates guanylate cyclase"/>
</dbReference>
<dbReference type="Reactome" id="R-HSA-445355">
    <property type="pathway name" value="Smooth Muscle Contraction"/>
</dbReference>
<dbReference type="SignaLink" id="Q02153"/>
<dbReference type="SIGNOR" id="Q02153"/>
<dbReference type="BioGRID-ORCS" id="2983">
    <property type="hits" value="8 hits in 1143 CRISPR screens"/>
</dbReference>
<dbReference type="EvolutionaryTrace" id="Q02153"/>
<dbReference type="GeneWiki" id="GUCY1B3"/>
<dbReference type="GenomeRNAi" id="2983"/>
<dbReference type="Pharos" id="Q02153">
    <property type="development level" value="Tclin"/>
</dbReference>
<dbReference type="PRO" id="PR:Q02153"/>
<dbReference type="Proteomes" id="UP000005640">
    <property type="component" value="Chromosome 4"/>
</dbReference>
<dbReference type="RNAct" id="Q02153">
    <property type="molecule type" value="protein"/>
</dbReference>
<dbReference type="Bgee" id="ENSG00000061918">
    <property type="expression patterns" value="Expressed in middle temporal gyrus and 208 other cell types or tissues"/>
</dbReference>
<dbReference type="ExpressionAtlas" id="Q02153">
    <property type="expression patterns" value="baseline and differential"/>
</dbReference>
<dbReference type="GO" id="GO:0005829">
    <property type="term" value="C:cytosol"/>
    <property type="evidence" value="ECO:0000314"/>
    <property type="project" value="HPA"/>
</dbReference>
<dbReference type="GO" id="GO:0098978">
    <property type="term" value="C:glutamatergic synapse"/>
    <property type="evidence" value="ECO:0007669"/>
    <property type="project" value="Ensembl"/>
</dbReference>
<dbReference type="GO" id="GO:0008074">
    <property type="term" value="C:guanylate cyclase complex, soluble"/>
    <property type="evidence" value="ECO:0000314"/>
    <property type="project" value="UniProtKB"/>
</dbReference>
<dbReference type="GO" id="GO:0098831">
    <property type="term" value="C:presynaptic active zone cytoplasmic component"/>
    <property type="evidence" value="ECO:0007669"/>
    <property type="project" value="Ensembl"/>
</dbReference>
<dbReference type="GO" id="GO:0004016">
    <property type="term" value="F:adenylate cyclase activity"/>
    <property type="evidence" value="ECO:0007669"/>
    <property type="project" value="Ensembl"/>
</dbReference>
<dbReference type="GO" id="GO:0047805">
    <property type="term" value="F:cytidylate cyclase activity"/>
    <property type="evidence" value="ECO:0007669"/>
    <property type="project" value="Ensembl"/>
</dbReference>
<dbReference type="GO" id="GO:0005525">
    <property type="term" value="F:GTP binding"/>
    <property type="evidence" value="ECO:0007669"/>
    <property type="project" value="UniProtKB-KW"/>
</dbReference>
<dbReference type="GO" id="GO:0004383">
    <property type="term" value="F:guanylate cyclase activity"/>
    <property type="evidence" value="ECO:0000314"/>
    <property type="project" value="UniProtKB"/>
</dbReference>
<dbReference type="GO" id="GO:0020037">
    <property type="term" value="F:heme binding"/>
    <property type="evidence" value="ECO:0000250"/>
    <property type="project" value="UniProtKB"/>
</dbReference>
<dbReference type="GO" id="GO:0051879">
    <property type="term" value="F:Hsp90 protein binding"/>
    <property type="evidence" value="ECO:0007669"/>
    <property type="project" value="Ensembl"/>
</dbReference>
<dbReference type="GO" id="GO:0046872">
    <property type="term" value="F:metal ion binding"/>
    <property type="evidence" value="ECO:0007669"/>
    <property type="project" value="UniProtKB-KW"/>
</dbReference>
<dbReference type="GO" id="GO:0070026">
    <property type="term" value="F:nitric oxide binding"/>
    <property type="evidence" value="ECO:0007669"/>
    <property type="project" value="Ensembl"/>
</dbReference>
<dbReference type="GO" id="GO:0044877">
    <property type="term" value="F:protein-containing complex binding"/>
    <property type="evidence" value="ECO:0007669"/>
    <property type="project" value="Ensembl"/>
</dbReference>
<dbReference type="GO" id="GO:0038023">
    <property type="term" value="F:signaling receptor activity"/>
    <property type="evidence" value="ECO:0000304"/>
    <property type="project" value="ProtInc"/>
</dbReference>
<dbReference type="GO" id="GO:0008015">
    <property type="term" value="P:blood circulation"/>
    <property type="evidence" value="ECO:0000304"/>
    <property type="project" value="ProtInc"/>
</dbReference>
<dbReference type="GO" id="GO:0071732">
    <property type="term" value="P:cellular response to nitric oxide"/>
    <property type="evidence" value="ECO:0000250"/>
    <property type="project" value="UniProtKB"/>
</dbReference>
<dbReference type="GO" id="GO:0006182">
    <property type="term" value="P:cGMP biosynthetic process"/>
    <property type="evidence" value="ECO:0000314"/>
    <property type="project" value="UniProtKB"/>
</dbReference>
<dbReference type="GO" id="GO:0019934">
    <property type="term" value="P:cGMP-mediated signaling"/>
    <property type="evidence" value="ECO:0000318"/>
    <property type="project" value="GO_Central"/>
</dbReference>
<dbReference type="GO" id="GO:0007263">
    <property type="term" value="P:nitric oxide mediated signal transduction"/>
    <property type="evidence" value="ECO:0000304"/>
    <property type="project" value="ProtInc"/>
</dbReference>
<dbReference type="GO" id="GO:0038060">
    <property type="term" value="P:nitric oxide-cGMP-mediated signaling"/>
    <property type="evidence" value="ECO:0000314"/>
    <property type="project" value="ComplexPortal"/>
</dbReference>
<dbReference type="GO" id="GO:0070482">
    <property type="term" value="P:response to oxygen levels"/>
    <property type="evidence" value="ECO:0000318"/>
    <property type="project" value="GO_Central"/>
</dbReference>
<dbReference type="CDD" id="cd07302">
    <property type="entry name" value="CHD"/>
    <property type="match status" value="1"/>
</dbReference>
<dbReference type="FunFam" id="3.30.70.1230:FF:000005">
    <property type="entry name" value="Guanylate cyclase soluble subunit beta-1"/>
    <property type="match status" value="1"/>
</dbReference>
<dbReference type="FunFam" id="3.90.1520.10:FF:000001">
    <property type="entry name" value="Guanylate cyclase soluble subunit beta-1"/>
    <property type="match status" value="1"/>
</dbReference>
<dbReference type="FunFam" id="3.30.450.260:FF:000001">
    <property type="entry name" value="guanylate cyclase soluble subunit beta-1 isoform X1"/>
    <property type="match status" value="1"/>
</dbReference>
<dbReference type="Gene3D" id="6.10.250.780">
    <property type="match status" value="1"/>
</dbReference>
<dbReference type="Gene3D" id="3.90.1520.10">
    <property type="entry name" value="H-NOX domain"/>
    <property type="match status" value="1"/>
</dbReference>
<dbReference type="Gene3D" id="3.30.450.260">
    <property type="entry name" value="Haem NO binding associated domain"/>
    <property type="match status" value="1"/>
</dbReference>
<dbReference type="Gene3D" id="3.30.70.1230">
    <property type="entry name" value="Nucleotide cyclase"/>
    <property type="match status" value="1"/>
</dbReference>
<dbReference type="InterPro" id="IPR001054">
    <property type="entry name" value="A/G_cyclase"/>
</dbReference>
<dbReference type="InterPro" id="IPR018297">
    <property type="entry name" value="A/G_cyclase_CS"/>
</dbReference>
<dbReference type="InterPro" id="IPR038158">
    <property type="entry name" value="H-NOX_domain_sf"/>
</dbReference>
<dbReference type="InterPro" id="IPR011644">
    <property type="entry name" value="Heme_NO-bd"/>
</dbReference>
<dbReference type="InterPro" id="IPR011645">
    <property type="entry name" value="HNOB_dom_associated"/>
</dbReference>
<dbReference type="InterPro" id="IPR042463">
    <property type="entry name" value="HNOB_dom_associated_sf"/>
</dbReference>
<dbReference type="InterPro" id="IPR024096">
    <property type="entry name" value="NO_sig/Golgi_transp_ligand-bd"/>
</dbReference>
<dbReference type="InterPro" id="IPR029787">
    <property type="entry name" value="Nucleotide_cyclase"/>
</dbReference>
<dbReference type="PANTHER" id="PTHR45655:SF2">
    <property type="entry name" value="GUANYLATE CYCLASE SOLUBLE SUBUNIT BETA-1"/>
    <property type="match status" value="1"/>
</dbReference>
<dbReference type="PANTHER" id="PTHR45655">
    <property type="entry name" value="GUANYLATE CYCLASE SOLUBLE SUBUNIT BETA-2"/>
    <property type="match status" value="1"/>
</dbReference>
<dbReference type="Pfam" id="PF00211">
    <property type="entry name" value="Guanylate_cyc"/>
    <property type="match status" value="1"/>
</dbReference>
<dbReference type="Pfam" id="PF07700">
    <property type="entry name" value="HNOB"/>
    <property type="match status" value="1"/>
</dbReference>
<dbReference type="Pfam" id="PF07701">
    <property type="entry name" value="HNOBA"/>
    <property type="match status" value="1"/>
</dbReference>
<dbReference type="SMART" id="SM00044">
    <property type="entry name" value="CYCc"/>
    <property type="match status" value="1"/>
</dbReference>
<dbReference type="SUPFAM" id="SSF111126">
    <property type="entry name" value="Ligand-binding domain in the NO signalling and Golgi transport"/>
    <property type="match status" value="1"/>
</dbReference>
<dbReference type="SUPFAM" id="SSF55073">
    <property type="entry name" value="Nucleotide cyclase"/>
    <property type="match status" value="1"/>
</dbReference>
<dbReference type="PROSITE" id="PS00452">
    <property type="entry name" value="GUANYLATE_CYCLASE_1"/>
    <property type="match status" value="1"/>
</dbReference>
<dbReference type="PROSITE" id="PS50125">
    <property type="entry name" value="GUANYLATE_CYCLASE_2"/>
    <property type="match status" value="1"/>
</dbReference>
<evidence type="ECO:0000250" key="1">
    <source>
        <dbReference type="UniProtKB" id="P16068"/>
    </source>
</evidence>
<evidence type="ECO:0000255" key="2">
    <source>
        <dbReference type="PROSITE-ProRule" id="PRU00099"/>
    </source>
</evidence>
<evidence type="ECO:0000269" key="3">
    <source>
    </source>
</evidence>
<evidence type="ECO:0000269" key="4">
    <source>
    </source>
</evidence>
<evidence type="ECO:0000269" key="5">
    <source>
    </source>
</evidence>
<evidence type="ECO:0000303" key="6">
    <source>
    </source>
</evidence>
<evidence type="ECO:0000303" key="7">
    <source>
    </source>
</evidence>
<evidence type="ECO:0000303" key="8">
    <source ref="2"/>
</evidence>
<evidence type="ECO:0000305" key="9"/>
<evidence type="ECO:0000312" key="10">
    <source>
        <dbReference type="HGNC" id="HGNC:4687"/>
    </source>
</evidence>
<evidence type="ECO:0007744" key="11">
    <source>
        <dbReference type="PDB" id="2WZ1"/>
    </source>
</evidence>
<evidence type="ECO:0007744" key="12">
    <source>
        <dbReference type="PDB" id="3UVJ"/>
    </source>
</evidence>
<evidence type="ECO:0007744" key="13">
    <source>
        <dbReference type="PDB" id="4NI2"/>
    </source>
</evidence>
<evidence type="ECO:0007829" key="14">
    <source>
        <dbReference type="PDB" id="2WZ1"/>
    </source>
</evidence>
<evidence type="ECO:0007829" key="15">
    <source>
        <dbReference type="PDB" id="5MNW"/>
    </source>
</evidence>
<evidence type="ECO:0007829" key="16">
    <source>
        <dbReference type="PDB" id="8HBE"/>
    </source>
</evidence>
<evidence type="ECO:0007829" key="17">
    <source>
        <dbReference type="PDB" id="8HBF"/>
    </source>
</evidence>
<evidence type="ECO:0007829" key="18">
    <source>
        <dbReference type="PDB" id="8HBH"/>
    </source>
</evidence>
<comment type="function">
    <text evidence="1 3">Mediates responses to nitric oxide (NO) by catalyzing the biosynthesis of the signaling molecule cGMP.</text>
</comment>
<comment type="catalytic activity">
    <reaction evidence="3">
        <text>GTP = 3',5'-cyclic GMP + diphosphate</text>
        <dbReference type="Rhea" id="RHEA:13665"/>
        <dbReference type="ChEBI" id="CHEBI:33019"/>
        <dbReference type="ChEBI" id="CHEBI:37565"/>
        <dbReference type="ChEBI" id="CHEBI:57746"/>
        <dbReference type="EC" id="4.6.1.2"/>
    </reaction>
</comment>
<comment type="cofactor">
    <cofactor evidence="1">
        <name>heme</name>
        <dbReference type="ChEBI" id="CHEBI:30413"/>
    </cofactor>
    <text evidence="1">Binds 1 or 2 heme groups per heterodimer. Heme is required for responding to nitric oxide, but not for catalytic activity.</text>
</comment>
<comment type="activity regulation">
    <text evidence="3">Activated by nitric oxide in the presence of magnesium or manganese ions.</text>
</comment>
<comment type="subunit">
    <text evidence="4 5">The active enzyme is formed by a heterodimer of an alpha and a beta subunit. Heterodimer with GUCY1A1 (PubMed:1352257, PubMed:23505436, PubMed:24669844). Can also form inactive homodimers in vitro (PubMed:23505436, PubMed:24669844).</text>
</comment>
<comment type="interaction">
    <interactant intactId="EBI-6911707">
        <id>Q02153</id>
    </interactant>
    <interactant intactId="EBI-3910037">
        <id>Q02108</id>
        <label>GUCY1A1</label>
    </interactant>
    <organismsDiffer>false</organismsDiffer>
    <experiments>3</experiments>
</comment>
<comment type="interaction">
    <interactant intactId="EBI-25372164">
        <id>Q02153-1</id>
    </interactant>
    <interactant intactId="EBI-25372173">
        <id>Q02108-1</id>
        <label>GUCY1A1</label>
    </interactant>
    <organismsDiffer>false</organismsDiffer>
    <experiments>2</experiments>
</comment>
<comment type="subcellular location">
    <subcellularLocation>
        <location evidence="1">Cytoplasm</location>
    </subcellularLocation>
</comment>
<comment type="alternative products">
    <event type="alternative splicing"/>
    <isoform>
        <id>Q02153-1</id>
        <name>HSGC-1</name>
        <sequence type="displayed"/>
    </isoform>
    <isoform>
        <id>Q02153-2</id>
        <name>HSGC-2</name>
        <sequence type="described" ref="VSP_001813"/>
    </isoform>
    <isoform>
        <id>Q02153-3</id>
        <name>3</name>
        <sequence type="described" ref="VSP_054365"/>
    </isoform>
</comment>
<comment type="tissue specificity">
    <text evidence="3">Detected in brain cortex and cerebellum (at protein level).</text>
</comment>
<comment type="miscellaneous">
    <text>There are two types of guanylate cyclases: soluble forms and membrane-associated receptor forms.</text>
</comment>
<comment type="similarity">
    <text evidence="2">Belongs to the adenylyl cyclase class-4/guanylyl cyclase family.</text>
</comment>
<protein>
    <recommendedName>
        <fullName evidence="9">Guanylate cyclase soluble subunit beta-1</fullName>
        <shortName>GCS-beta-1</shortName>
        <ecNumber evidence="3 4 5">4.6.1.2</ecNumber>
    </recommendedName>
    <alternativeName>
        <fullName evidence="6">Guanylate cyclase soluble subunit beta-3</fullName>
        <shortName>GCS-beta-3</shortName>
    </alternativeName>
    <alternativeName>
        <fullName>Soluble guanylate cyclase small subunit</fullName>
    </alternativeName>
</protein>
<name>GCYB1_HUMAN</name>
<accession>Q02153</accession>
<accession>B7Z426</accession>
<accession>Q86WY5</accession>
<gene>
    <name evidence="10" type="primary">GUCY1B1</name>
    <name type="synonym">GUC1B3</name>
    <name type="synonym">GUCSB3</name>
    <name type="synonym">GUCY1B3</name>
</gene>
<keyword id="KW-0002">3D-structure</keyword>
<keyword id="KW-0025">Alternative splicing</keyword>
<keyword id="KW-0141">cGMP biosynthesis</keyword>
<keyword id="KW-0963">Cytoplasm</keyword>
<keyword id="KW-0903">Direct protein sequencing</keyword>
<keyword id="KW-0342">GTP-binding</keyword>
<keyword id="KW-0349">Heme</keyword>
<keyword id="KW-0408">Iron</keyword>
<keyword id="KW-0456">Lyase</keyword>
<keyword id="KW-0479">Metal-binding</keyword>
<keyword id="KW-0547">Nucleotide-binding</keyword>
<keyword id="KW-1267">Proteomics identification</keyword>
<keyword id="KW-1185">Reference proteome</keyword>
<feature type="chain" id="PRO_0000074116" description="Guanylate cyclase soluble subunit beta-1">
    <location>
        <begin position="1"/>
        <end position="619"/>
    </location>
</feature>
<feature type="domain" description="Guanylate cyclase" evidence="2">
    <location>
        <begin position="421"/>
        <end position="554"/>
    </location>
</feature>
<feature type="binding site" description="proximal binding residue" evidence="1">
    <location>
        <position position="105"/>
    </location>
    <ligand>
        <name>heme</name>
        <dbReference type="ChEBI" id="CHEBI:30413"/>
    </ligand>
    <ligandPart>
        <name>Fe</name>
        <dbReference type="ChEBI" id="CHEBI:18248"/>
    </ligandPart>
</feature>
<feature type="splice variant" id="VSP_054365" description="In isoform 3." evidence="7">
    <original>MYGFVNHALELLVIRNYGPEVWEDIK</original>
    <variation>MLMCFI</variation>
    <location>
        <begin position="1"/>
        <end position="26"/>
    </location>
</feature>
<feature type="splice variant" id="VSP_001813" description="In isoform HSGC-2." evidence="8">
    <location>
        <begin position="393"/>
        <end position="425"/>
    </location>
</feature>
<feature type="helix" evidence="17">
    <location>
        <begin position="3"/>
        <end position="17"/>
    </location>
</feature>
<feature type="helix" evidence="17">
    <location>
        <begin position="19"/>
        <end position="28"/>
    </location>
</feature>
<feature type="turn" evidence="15">
    <location>
        <begin position="39"/>
        <end position="41"/>
    </location>
</feature>
<feature type="helix" evidence="17">
    <location>
        <begin position="45"/>
        <end position="58"/>
    </location>
</feature>
<feature type="helix" evidence="17">
    <location>
        <begin position="63"/>
        <end position="80"/>
    </location>
</feature>
<feature type="helix" evidence="17">
    <location>
        <begin position="85"/>
        <end position="89"/>
    </location>
</feature>
<feature type="helix" evidence="17">
    <location>
        <begin position="94"/>
        <end position="99"/>
    </location>
</feature>
<feature type="helix" evidence="17">
    <location>
        <begin position="101"/>
        <end position="111"/>
    </location>
</feature>
<feature type="strand" evidence="17">
    <location>
        <begin position="119"/>
        <end position="124"/>
    </location>
</feature>
<feature type="strand" evidence="17">
    <location>
        <begin position="128"/>
        <end position="136"/>
    </location>
</feature>
<feature type="strand" evidence="17">
    <location>
        <begin position="138"/>
        <end position="141"/>
    </location>
</feature>
<feature type="turn" evidence="18">
    <location>
        <begin position="142"/>
        <end position="144"/>
    </location>
</feature>
<feature type="helix" evidence="17">
    <location>
        <begin position="145"/>
        <end position="158"/>
    </location>
</feature>
<feature type="strand" evidence="17">
    <location>
        <begin position="162"/>
        <end position="164"/>
    </location>
</feature>
<feature type="strand" evidence="16">
    <location>
        <begin position="170"/>
        <end position="173"/>
    </location>
</feature>
<feature type="strand" evidence="17">
    <location>
        <begin position="175"/>
        <end position="183"/>
    </location>
</feature>
<feature type="helix" evidence="15">
    <location>
        <begin position="185"/>
        <end position="187"/>
    </location>
</feature>
<feature type="helix" evidence="17">
    <location>
        <begin position="210"/>
        <end position="216"/>
    </location>
</feature>
<feature type="strand" evidence="17">
    <location>
        <begin position="218"/>
        <end position="223"/>
    </location>
</feature>
<feature type="strand" evidence="17">
    <location>
        <begin position="227"/>
        <end position="232"/>
    </location>
</feature>
<feature type="helix" evidence="17">
    <location>
        <begin position="234"/>
        <end position="239"/>
    </location>
</feature>
<feature type="helix" evidence="17">
    <location>
        <begin position="241"/>
        <end position="243"/>
    </location>
</feature>
<feature type="strand" evidence="16">
    <location>
        <begin position="244"/>
        <end position="246"/>
    </location>
</feature>
<feature type="helix" evidence="17">
    <location>
        <begin position="250"/>
        <end position="253"/>
    </location>
</feature>
<feature type="strand" evidence="17">
    <location>
        <begin position="254"/>
        <end position="259"/>
    </location>
</feature>
<feature type="helix" evidence="17">
    <location>
        <begin position="265"/>
        <end position="270"/>
    </location>
</feature>
<feature type="turn" evidence="17">
    <location>
        <begin position="271"/>
        <end position="273"/>
    </location>
</feature>
<feature type="strand" evidence="17">
    <location>
        <begin position="276"/>
        <end position="280"/>
    </location>
</feature>
<feature type="turn" evidence="16">
    <location>
        <begin position="282"/>
        <end position="284"/>
    </location>
</feature>
<feature type="strand" evidence="17">
    <location>
        <begin position="305"/>
        <end position="313"/>
    </location>
</feature>
<feature type="turn" evidence="17">
    <location>
        <begin position="314"/>
        <end position="317"/>
    </location>
</feature>
<feature type="strand" evidence="17">
    <location>
        <begin position="318"/>
        <end position="325"/>
    </location>
</feature>
<feature type="helix" evidence="17">
    <location>
        <begin position="330"/>
        <end position="335"/>
    </location>
</feature>
<feature type="turn" evidence="17">
    <location>
        <begin position="340"/>
        <end position="342"/>
    </location>
</feature>
<feature type="strand" evidence="17">
    <location>
        <begin position="345"/>
        <end position="347"/>
    </location>
</feature>
<feature type="helix" evidence="17">
    <location>
        <begin position="349"/>
        <end position="397"/>
    </location>
</feature>
<feature type="helix" evidence="17">
    <location>
        <begin position="400"/>
        <end position="407"/>
    </location>
</feature>
<feature type="strand" evidence="14">
    <location>
        <begin position="415"/>
        <end position="427"/>
    </location>
</feature>
<feature type="helix" evidence="14">
    <location>
        <begin position="430"/>
        <end position="436"/>
    </location>
</feature>
<feature type="strand" evidence="18">
    <location>
        <begin position="439"/>
        <end position="441"/>
    </location>
</feature>
<feature type="helix" evidence="14">
    <location>
        <begin position="443"/>
        <end position="461"/>
    </location>
</feature>
<feature type="turn" evidence="14">
    <location>
        <begin position="463"/>
        <end position="465"/>
    </location>
</feature>
<feature type="strand" evidence="14">
    <location>
        <begin position="470"/>
        <end position="472"/>
    </location>
</feature>
<feature type="strand" evidence="14">
    <location>
        <begin position="479"/>
        <end position="487"/>
    </location>
</feature>
<feature type="helix" evidence="14">
    <location>
        <begin position="492"/>
        <end position="507"/>
    </location>
</feature>
<feature type="strand" evidence="18">
    <location>
        <begin position="509"/>
        <end position="516"/>
    </location>
</feature>
<feature type="strand" evidence="14">
    <location>
        <begin position="519"/>
        <end position="533"/>
    </location>
</feature>
<feature type="strand" evidence="14">
    <location>
        <begin position="535"/>
        <end position="537"/>
    </location>
</feature>
<feature type="strand" evidence="14">
    <location>
        <begin position="539"/>
        <end position="544"/>
    </location>
</feature>
<feature type="helix" evidence="14">
    <location>
        <begin position="545"/>
        <end position="555"/>
    </location>
</feature>
<feature type="strand" evidence="14">
    <location>
        <begin position="561"/>
        <end position="565"/>
    </location>
</feature>
<feature type="helix" evidence="14">
    <location>
        <begin position="566"/>
        <end position="571"/>
    </location>
</feature>
<feature type="turn" evidence="14">
    <location>
        <begin position="575"/>
        <end position="577"/>
    </location>
</feature>
<feature type="strand" evidence="14">
    <location>
        <begin position="582"/>
        <end position="590"/>
    </location>
</feature>
<feature type="strand" evidence="14">
    <location>
        <begin position="599"/>
        <end position="607"/>
    </location>
</feature>
<organism>
    <name type="scientific">Homo sapiens</name>
    <name type="common">Human</name>
    <dbReference type="NCBI Taxonomy" id="9606"/>
    <lineage>
        <taxon>Eukaryota</taxon>
        <taxon>Metazoa</taxon>
        <taxon>Chordata</taxon>
        <taxon>Craniata</taxon>
        <taxon>Vertebrata</taxon>
        <taxon>Euteleostomi</taxon>
        <taxon>Mammalia</taxon>
        <taxon>Eutheria</taxon>
        <taxon>Euarchontoglires</taxon>
        <taxon>Primates</taxon>
        <taxon>Haplorrhini</taxon>
        <taxon>Catarrhini</taxon>
        <taxon>Hominidae</taxon>
        <taxon>Homo</taxon>
    </lineage>
</organism>
<proteinExistence type="evidence at protein level"/>
<reference key="1">
    <citation type="journal article" date="1992" name="FEBS Lett.">
        <title>Molecular cloning of the cDNAs coding for the two subunits of soluble guanylyl cyclase from human brain.</title>
        <authorList>
            <person name="Giuili G."/>
            <person name="Scholl U."/>
            <person name="Bulle F."/>
            <person name="Guellaeen G."/>
        </authorList>
    </citation>
    <scope>NUCLEOTIDE SEQUENCE [MRNA]</scope>
    <scope>FUNCTION</scope>
    <scope>CATALYTIC ACTIVITY</scope>
    <scope>ACTIVITY REGULATION</scope>
    <scope>SUBUNIT</scope>
    <scope>TISSUE SPECIFICITY</scope>
    <source>
        <tissue>Brain</tissue>
    </source>
</reference>
<reference key="2">
    <citation type="submission" date="1997-08" db="EMBL/GenBank/DDBJ databases">
        <authorList>
            <person name="Gansemans Y."/>
            <person name="Brouckaert P."/>
            <person name="Fiers W."/>
        </authorList>
    </citation>
    <scope>NUCLEOTIDE SEQUENCE [MRNA] (ISOFORM HSGC-2)</scope>
    <source>
        <tissue>Kidney</tissue>
    </source>
</reference>
<reference key="3">
    <citation type="journal article" date="2004" name="Nat. Genet.">
        <title>Complete sequencing and characterization of 21,243 full-length human cDNAs.</title>
        <authorList>
            <person name="Ota T."/>
            <person name="Suzuki Y."/>
            <person name="Nishikawa T."/>
            <person name="Otsuki T."/>
            <person name="Sugiyama T."/>
            <person name="Irie R."/>
            <person name="Wakamatsu A."/>
            <person name="Hayashi K."/>
            <person name="Sato H."/>
            <person name="Nagai K."/>
            <person name="Kimura K."/>
            <person name="Makita H."/>
            <person name="Sekine M."/>
            <person name="Obayashi M."/>
            <person name="Nishi T."/>
            <person name="Shibahara T."/>
            <person name="Tanaka T."/>
            <person name="Ishii S."/>
            <person name="Yamamoto J."/>
            <person name="Saito K."/>
            <person name="Kawai Y."/>
            <person name="Isono Y."/>
            <person name="Nakamura Y."/>
            <person name="Nagahari K."/>
            <person name="Murakami K."/>
            <person name="Yasuda T."/>
            <person name="Iwayanagi T."/>
            <person name="Wagatsuma M."/>
            <person name="Shiratori A."/>
            <person name="Sudo H."/>
            <person name="Hosoiri T."/>
            <person name="Kaku Y."/>
            <person name="Kodaira H."/>
            <person name="Kondo H."/>
            <person name="Sugawara M."/>
            <person name="Takahashi M."/>
            <person name="Kanda K."/>
            <person name="Yokoi T."/>
            <person name="Furuya T."/>
            <person name="Kikkawa E."/>
            <person name="Omura Y."/>
            <person name="Abe K."/>
            <person name="Kamihara K."/>
            <person name="Katsuta N."/>
            <person name="Sato K."/>
            <person name="Tanikawa M."/>
            <person name="Yamazaki M."/>
            <person name="Ninomiya K."/>
            <person name="Ishibashi T."/>
            <person name="Yamashita H."/>
            <person name="Murakawa K."/>
            <person name="Fujimori K."/>
            <person name="Tanai H."/>
            <person name="Kimata M."/>
            <person name="Watanabe M."/>
            <person name="Hiraoka S."/>
            <person name="Chiba Y."/>
            <person name="Ishida S."/>
            <person name="Ono Y."/>
            <person name="Takiguchi S."/>
            <person name="Watanabe S."/>
            <person name="Yosida M."/>
            <person name="Hotuta T."/>
            <person name="Kusano J."/>
            <person name="Kanehori K."/>
            <person name="Takahashi-Fujii A."/>
            <person name="Hara H."/>
            <person name="Tanase T.-O."/>
            <person name="Nomura Y."/>
            <person name="Togiya S."/>
            <person name="Komai F."/>
            <person name="Hara R."/>
            <person name="Takeuchi K."/>
            <person name="Arita M."/>
            <person name="Imose N."/>
            <person name="Musashino K."/>
            <person name="Yuuki H."/>
            <person name="Oshima A."/>
            <person name="Sasaki N."/>
            <person name="Aotsuka S."/>
            <person name="Yoshikawa Y."/>
            <person name="Matsunawa H."/>
            <person name="Ichihara T."/>
            <person name="Shiohata N."/>
            <person name="Sano S."/>
            <person name="Moriya S."/>
            <person name="Momiyama H."/>
            <person name="Satoh N."/>
            <person name="Takami S."/>
            <person name="Terashima Y."/>
            <person name="Suzuki O."/>
            <person name="Nakagawa S."/>
            <person name="Senoh A."/>
            <person name="Mizoguchi H."/>
            <person name="Goto Y."/>
            <person name="Shimizu F."/>
            <person name="Wakebe H."/>
            <person name="Hishigaki H."/>
            <person name="Watanabe T."/>
            <person name="Sugiyama A."/>
            <person name="Takemoto M."/>
            <person name="Kawakami B."/>
            <person name="Yamazaki M."/>
            <person name="Watanabe K."/>
            <person name="Kumagai A."/>
            <person name="Itakura S."/>
            <person name="Fukuzumi Y."/>
            <person name="Fujimori Y."/>
            <person name="Komiyama M."/>
            <person name="Tashiro H."/>
            <person name="Tanigami A."/>
            <person name="Fujiwara T."/>
            <person name="Ono T."/>
            <person name="Yamada K."/>
            <person name="Fujii Y."/>
            <person name="Ozaki K."/>
            <person name="Hirao M."/>
            <person name="Ohmori Y."/>
            <person name="Kawabata A."/>
            <person name="Hikiji T."/>
            <person name="Kobatake N."/>
            <person name="Inagaki H."/>
            <person name="Ikema Y."/>
            <person name="Okamoto S."/>
            <person name="Okitani R."/>
            <person name="Kawakami T."/>
            <person name="Noguchi S."/>
            <person name="Itoh T."/>
            <person name="Shigeta K."/>
            <person name="Senba T."/>
            <person name="Matsumura K."/>
            <person name="Nakajima Y."/>
            <person name="Mizuno T."/>
            <person name="Morinaga M."/>
            <person name="Sasaki M."/>
            <person name="Togashi T."/>
            <person name="Oyama M."/>
            <person name="Hata H."/>
            <person name="Watanabe M."/>
            <person name="Komatsu T."/>
            <person name="Mizushima-Sugano J."/>
            <person name="Satoh T."/>
            <person name="Shirai Y."/>
            <person name="Takahashi Y."/>
            <person name="Nakagawa K."/>
            <person name="Okumura K."/>
            <person name="Nagase T."/>
            <person name="Nomura N."/>
            <person name="Kikuchi H."/>
            <person name="Masuho Y."/>
            <person name="Yamashita R."/>
            <person name="Nakai K."/>
            <person name="Yada T."/>
            <person name="Nakamura Y."/>
            <person name="Ohara O."/>
            <person name="Isogai T."/>
            <person name="Sugano S."/>
        </authorList>
    </citation>
    <scope>NUCLEOTIDE SEQUENCE [LARGE SCALE MRNA] (ISOFORM 3)</scope>
    <source>
        <tissue>Tongue</tissue>
    </source>
</reference>
<reference key="4">
    <citation type="journal article" date="2005" name="Nature">
        <title>Generation and annotation of the DNA sequences of human chromosomes 2 and 4.</title>
        <authorList>
            <person name="Hillier L.W."/>
            <person name="Graves T.A."/>
            <person name="Fulton R.S."/>
            <person name="Fulton L.A."/>
            <person name="Pepin K.H."/>
            <person name="Minx P."/>
            <person name="Wagner-McPherson C."/>
            <person name="Layman D."/>
            <person name="Wylie K."/>
            <person name="Sekhon M."/>
            <person name="Becker M.C."/>
            <person name="Fewell G.A."/>
            <person name="Delehaunty K.D."/>
            <person name="Miner T.L."/>
            <person name="Nash W.E."/>
            <person name="Kremitzki C."/>
            <person name="Oddy L."/>
            <person name="Du H."/>
            <person name="Sun H."/>
            <person name="Bradshaw-Cordum H."/>
            <person name="Ali J."/>
            <person name="Carter J."/>
            <person name="Cordes M."/>
            <person name="Harris A."/>
            <person name="Isak A."/>
            <person name="van Brunt A."/>
            <person name="Nguyen C."/>
            <person name="Du F."/>
            <person name="Courtney L."/>
            <person name="Kalicki J."/>
            <person name="Ozersky P."/>
            <person name="Abbott S."/>
            <person name="Armstrong J."/>
            <person name="Belter E.A."/>
            <person name="Caruso L."/>
            <person name="Cedroni M."/>
            <person name="Cotton M."/>
            <person name="Davidson T."/>
            <person name="Desai A."/>
            <person name="Elliott G."/>
            <person name="Erb T."/>
            <person name="Fronick C."/>
            <person name="Gaige T."/>
            <person name="Haakenson W."/>
            <person name="Haglund K."/>
            <person name="Holmes A."/>
            <person name="Harkins R."/>
            <person name="Kim K."/>
            <person name="Kruchowski S.S."/>
            <person name="Strong C.M."/>
            <person name="Grewal N."/>
            <person name="Goyea E."/>
            <person name="Hou S."/>
            <person name="Levy A."/>
            <person name="Martinka S."/>
            <person name="Mead K."/>
            <person name="McLellan M.D."/>
            <person name="Meyer R."/>
            <person name="Randall-Maher J."/>
            <person name="Tomlinson C."/>
            <person name="Dauphin-Kohlberg S."/>
            <person name="Kozlowicz-Reilly A."/>
            <person name="Shah N."/>
            <person name="Swearengen-Shahid S."/>
            <person name="Snider J."/>
            <person name="Strong J.T."/>
            <person name="Thompson J."/>
            <person name="Yoakum M."/>
            <person name="Leonard S."/>
            <person name="Pearman C."/>
            <person name="Trani L."/>
            <person name="Radionenko M."/>
            <person name="Waligorski J.E."/>
            <person name="Wang C."/>
            <person name="Rock S.M."/>
            <person name="Tin-Wollam A.-M."/>
            <person name="Maupin R."/>
            <person name="Latreille P."/>
            <person name="Wendl M.C."/>
            <person name="Yang S.-P."/>
            <person name="Pohl C."/>
            <person name="Wallis J.W."/>
            <person name="Spieth J."/>
            <person name="Bieri T.A."/>
            <person name="Berkowicz N."/>
            <person name="Nelson J.O."/>
            <person name="Osborne J."/>
            <person name="Ding L."/>
            <person name="Meyer R."/>
            <person name="Sabo A."/>
            <person name="Shotland Y."/>
            <person name="Sinha P."/>
            <person name="Wohldmann P.E."/>
            <person name="Cook L.L."/>
            <person name="Hickenbotham M.T."/>
            <person name="Eldred J."/>
            <person name="Williams D."/>
            <person name="Jones T.A."/>
            <person name="She X."/>
            <person name="Ciccarelli F.D."/>
            <person name="Izaurralde E."/>
            <person name="Taylor J."/>
            <person name="Schmutz J."/>
            <person name="Myers R.M."/>
            <person name="Cox D.R."/>
            <person name="Huang X."/>
            <person name="McPherson J.D."/>
            <person name="Mardis E.R."/>
            <person name="Clifton S.W."/>
            <person name="Warren W.C."/>
            <person name="Chinwalla A.T."/>
            <person name="Eddy S.R."/>
            <person name="Marra M.A."/>
            <person name="Ovcharenko I."/>
            <person name="Furey T.S."/>
            <person name="Miller W."/>
            <person name="Eichler E.E."/>
            <person name="Bork P."/>
            <person name="Suyama M."/>
            <person name="Torrents D."/>
            <person name="Waterston R.H."/>
            <person name="Wilson R.K."/>
        </authorList>
    </citation>
    <scope>NUCLEOTIDE SEQUENCE [LARGE SCALE GENOMIC DNA]</scope>
</reference>
<reference key="5">
    <citation type="journal article" date="2004" name="Genome Res.">
        <title>The status, quality, and expansion of the NIH full-length cDNA project: the Mammalian Gene Collection (MGC).</title>
        <authorList>
            <consortium name="The MGC Project Team"/>
        </authorList>
    </citation>
    <scope>NUCLEOTIDE SEQUENCE [LARGE SCALE MRNA] (ISOFORM HSGC-1)</scope>
    <source>
        <tissue>Brain</tissue>
    </source>
</reference>
<reference key="6">
    <citation type="journal article" date="1991" name="FEBS Lett.">
        <title>Heterogeneity in human soluble guanylate cyclase due to alternative splicing.</title>
        <authorList>
            <person name="Chhajilani V."/>
            <person name="Fraendberg P.-A."/>
            <person name="Ahlner J."/>
            <person name="Axelsson K.L."/>
            <person name="Wikberg J.E.S."/>
        </authorList>
    </citation>
    <scope>PROTEIN SEQUENCE OF 337-545</scope>
    <scope>ALTERNATIVE SPLICING</scope>
    <source>
        <tissue>Lung</tissue>
    </source>
</reference>
<reference evidence="11 12" key="7">
    <citation type="journal article" date="2013" name="PLoS ONE">
        <title>Crystal structures of the catalytic domain of human soluble guanylate cyclase.</title>
        <authorList>
            <person name="Allerston C.K."/>
            <person name="von Delft F."/>
            <person name="Gileadi O."/>
        </authorList>
    </citation>
    <scope>X-RAY CRYSTALLOGRAPHY (1.63 ANGSTROMS) OF 408-619 IN COMPLEX WITH GUCY1A1</scope>
    <scope>INTERACTION WITH GUCY1A1</scope>
    <scope>SUBUNIT</scope>
    <scope>CATALYTIC ACTIVITY</scope>
    <scope>ACTIVITY REGULATION</scope>
</reference>
<reference evidence="13" key="8">
    <citation type="journal article" date="2014" name="Biochemistry">
        <title>Interfacial residues promote an optimal alignment of the catalytic center in human soluble guanylate cyclase: heterodimerization is required but not sufficient for activity.</title>
        <authorList>
            <person name="Seeger F."/>
            <person name="Quintyn R."/>
            <person name="Tanimoto A."/>
            <person name="Williams G.J."/>
            <person name="Tainer J.A."/>
            <person name="Wysocki V.H."/>
            <person name="Garcin E.D."/>
        </authorList>
    </citation>
    <scope>X-RAY CRYSTALLOGRAPHY (1.90 ANGSTROMS) OF 408-608 IN COMPLEX WITH GUCY1A1</scope>
    <scope>INTERACTION WITH GUCY1A1</scope>
    <scope>CATALYTIC ACTIVITY</scope>
    <scope>SUBUNIT</scope>
</reference>